<keyword id="KW-0963">Cytoplasm</keyword>
<keyword id="KW-0378">Hydrolase</keyword>
<keyword id="KW-0645">Protease</keyword>
<keyword id="KW-0720">Serine protease</keyword>
<sequence length="220" mass="24225">MFNSQITSQRSSQVSSQSSATGIESALVPMVVEQTAKGERSYDIYSRLLKERVIFLCGQVEDHMANLIIAQLLFLESESPDKDIYLYINSPGGSVTAGMAIYDTMKFIKPNISTVCIGQAASMGAFLLSGGEKGKRYCLPNARVMIHQPLGGFQGQASDFEIHAKEILFIKDKLNKLMAEHTGQTLDKVSQDTDRDNFLSAEAAVEYGLVDSILEQRNDK</sequence>
<evidence type="ECO:0000255" key="1">
    <source>
        <dbReference type="HAMAP-Rule" id="MF_00444"/>
    </source>
</evidence>
<gene>
    <name evidence="1" type="primary">clpP</name>
    <name type="ordered locus">CPS_3785</name>
</gene>
<reference key="1">
    <citation type="journal article" date="2005" name="Proc. Natl. Acad. Sci. U.S.A.">
        <title>The psychrophilic lifestyle as revealed by the genome sequence of Colwellia psychrerythraea 34H through genomic and proteomic analyses.</title>
        <authorList>
            <person name="Methe B.A."/>
            <person name="Nelson K.E."/>
            <person name="Deming J.W."/>
            <person name="Momen B."/>
            <person name="Melamud E."/>
            <person name="Zhang X."/>
            <person name="Moult J."/>
            <person name="Madupu R."/>
            <person name="Nelson W.C."/>
            <person name="Dodson R.J."/>
            <person name="Brinkac L.M."/>
            <person name="Daugherty S.C."/>
            <person name="Durkin A.S."/>
            <person name="DeBoy R.T."/>
            <person name="Kolonay J.F."/>
            <person name="Sullivan S.A."/>
            <person name="Zhou L."/>
            <person name="Davidsen T.M."/>
            <person name="Wu M."/>
            <person name="Huston A.L."/>
            <person name="Lewis M."/>
            <person name="Weaver B."/>
            <person name="Weidman J.F."/>
            <person name="Khouri H."/>
            <person name="Utterback T.R."/>
            <person name="Feldblyum T.V."/>
            <person name="Fraser C.M."/>
        </authorList>
    </citation>
    <scope>NUCLEOTIDE SEQUENCE [LARGE SCALE GENOMIC DNA]</scope>
    <source>
        <strain>34H / ATCC BAA-681</strain>
    </source>
</reference>
<accession>Q47XL8</accession>
<dbReference type="EC" id="3.4.21.92" evidence="1"/>
<dbReference type="EMBL" id="CP000083">
    <property type="protein sequence ID" value="AAZ28097.1"/>
    <property type="molecule type" value="Genomic_DNA"/>
</dbReference>
<dbReference type="SMR" id="Q47XL8"/>
<dbReference type="STRING" id="167879.CPS_3785"/>
<dbReference type="MEROPS" id="S14.001"/>
<dbReference type="KEGG" id="cps:CPS_3785"/>
<dbReference type="eggNOG" id="COG0740">
    <property type="taxonomic scope" value="Bacteria"/>
</dbReference>
<dbReference type="HOGENOM" id="CLU_058707_3_2_6"/>
<dbReference type="Proteomes" id="UP000000547">
    <property type="component" value="Chromosome"/>
</dbReference>
<dbReference type="GO" id="GO:0005737">
    <property type="term" value="C:cytoplasm"/>
    <property type="evidence" value="ECO:0007669"/>
    <property type="project" value="UniProtKB-SubCell"/>
</dbReference>
<dbReference type="GO" id="GO:0009368">
    <property type="term" value="C:endopeptidase Clp complex"/>
    <property type="evidence" value="ECO:0007669"/>
    <property type="project" value="TreeGrafter"/>
</dbReference>
<dbReference type="GO" id="GO:0004176">
    <property type="term" value="F:ATP-dependent peptidase activity"/>
    <property type="evidence" value="ECO:0007669"/>
    <property type="project" value="InterPro"/>
</dbReference>
<dbReference type="GO" id="GO:0051117">
    <property type="term" value="F:ATPase binding"/>
    <property type="evidence" value="ECO:0007669"/>
    <property type="project" value="TreeGrafter"/>
</dbReference>
<dbReference type="GO" id="GO:0004252">
    <property type="term" value="F:serine-type endopeptidase activity"/>
    <property type="evidence" value="ECO:0007669"/>
    <property type="project" value="UniProtKB-UniRule"/>
</dbReference>
<dbReference type="GO" id="GO:0006515">
    <property type="term" value="P:protein quality control for misfolded or incompletely synthesized proteins"/>
    <property type="evidence" value="ECO:0007669"/>
    <property type="project" value="TreeGrafter"/>
</dbReference>
<dbReference type="CDD" id="cd07017">
    <property type="entry name" value="S14_ClpP_2"/>
    <property type="match status" value="1"/>
</dbReference>
<dbReference type="FunFam" id="3.90.226.10:FF:000001">
    <property type="entry name" value="ATP-dependent Clp protease proteolytic subunit"/>
    <property type="match status" value="1"/>
</dbReference>
<dbReference type="Gene3D" id="3.90.226.10">
    <property type="entry name" value="2-enoyl-CoA Hydratase, Chain A, domain 1"/>
    <property type="match status" value="1"/>
</dbReference>
<dbReference type="HAMAP" id="MF_00444">
    <property type="entry name" value="ClpP"/>
    <property type="match status" value="1"/>
</dbReference>
<dbReference type="InterPro" id="IPR001907">
    <property type="entry name" value="ClpP"/>
</dbReference>
<dbReference type="InterPro" id="IPR029045">
    <property type="entry name" value="ClpP/crotonase-like_dom_sf"/>
</dbReference>
<dbReference type="InterPro" id="IPR023562">
    <property type="entry name" value="ClpP/TepA"/>
</dbReference>
<dbReference type="InterPro" id="IPR033135">
    <property type="entry name" value="ClpP_His_AS"/>
</dbReference>
<dbReference type="InterPro" id="IPR018215">
    <property type="entry name" value="ClpP_Ser_AS"/>
</dbReference>
<dbReference type="NCBIfam" id="TIGR00493">
    <property type="entry name" value="clpP"/>
    <property type="match status" value="1"/>
</dbReference>
<dbReference type="NCBIfam" id="NF001368">
    <property type="entry name" value="PRK00277.1"/>
    <property type="match status" value="1"/>
</dbReference>
<dbReference type="NCBIfam" id="NF009205">
    <property type="entry name" value="PRK12553.1"/>
    <property type="match status" value="1"/>
</dbReference>
<dbReference type="PANTHER" id="PTHR10381">
    <property type="entry name" value="ATP-DEPENDENT CLP PROTEASE PROTEOLYTIC SUBUNIT"/>
    <property type="match status" value="1"/>
</dbReference>
<dbReference type="PANTHER" id="PTHR10381:SF70">
    <property type="entry name" value="ATP-DEPENDENT CLP PROTEASE PROTEOLYTIC SUBUNIT"/>
    <property type="match status" value="1"/>
</dbReference>
<dbReference type="Pfam" id="PF00574">
    <property type="entry name" value="CLP_protease"/>
    <property type="match status" value="1"/>
</dbReference>
<dbReference type="PRINTS" id="PR00127">
    <property type="entry name" value="CLPPROTEASEP"/>
</dbReference>
<dbReference type="SUPFAM" id="SSF52096">
    <property type="entry name" value="ClpP/crotonase"/>
    <property type="match status" value="1"/>
</dbReference>
<dbReference type="PROSITE" id="PS00382">
    <property type="entry name" value="CLP_PROTEASE_HIS"/>
    <property type="match status" value="1"/>
</dbReference>
<dbReference type="PROSITE" id="PS00381">
    <property type="entry name" value="CLP_PROTEASE_SER"/>
    <property type="match status" value="1"/>
</dbReference>
<protein>
    <recommendedName>
        <fullName evidence="1">ATP-dependent Clp protease proteolytic subunit</fullName>
        <ecNumber evidence="1">3.4.21.92</ecNumber>
    </recommendedName>
    <alternativeName>
        <fullName evidence="1">Endopeptidase Clp</fullName>
    </alternativeName>
</protein>
<comment type="function">
    <text evidence="1">Cleaves peptides in various proteins in a process that requires ATP hydrolysis. Has a chymotrypsin-like activity. Plays a major role in the degradation of misfolded proteins.</text>
</comment>
<comment type="catalytic activity">
    <reaction evidence="1">
        <text>Hydrolysis of proteins to small peptides in the presence of ATP and magnesium. alpha-casein is the usual test substrate. In the absence of ATP, only oligopeptides shorter than five residues are hydrolyzed (such as succinyl-Leu-Tyr-|-NHMec, and Leu-Tyr-Leu-|-Tyr-Trp, in which cleavage of the -Tyr-|-Leu- and -Tyr-|-Trp bonds also occurs).</text>
        <dbReference type="EC" id="3.4.21.92"/>
    </reaction>
</comment>
<comment type="subunit">
    <text evidence="1">Fourteen ClpP subunits assemble into 2 heptameric rings which stack back to back to give a disk-like structure with a central cavity, resembling the structure of eukaryotic proteasomes.</text>
</comment>
<comment type="subcellular location">
    <subcellularLocation>
        <location evidence="1">Cytoplasm</location>
    </subcellularLocation>
</comment>
<comment type="similarity">
    <text evidence="1">Belongs to the peptidase S14 family.</text>
</comment>
<name>CLPP_COLP3</name>
<feature type="chain" id="PRO_0000226440" description="ATP-dependent Clp protease proteolytic subunit">
    <location>
        <begin position="1"/>
        <end position="220"/>
    </location>
</feature>
<feature type="active site" description="Nucleophile" evidence="1">
    <location>
        <position position="122"/>
    </location>
</feature>
<feature type="active site" evidence="1">
    <location>
        <position position="147"/>
    </location>
</feature>
<proteinExistence type="inferred from homology"/>
<organism>
    <name type="scientific">Colwellia psychrerythraea (strain 34H / ATCC BAA-681)</name>
    <name type="common">Vibrio psychroerythus</name>
    <dbReference type="NCBI Taxonomy" id="167879"/>
    <lineage>
        <taxon>Bacteria</taxon>
        <taxon>Pseudomonadati</taxon>
        <taxon>Pseudomonadota</taxon>
        <taxon>Gammaproteobacteria</taxon>
        <taxon>Alteromonadales</taxon>
        <taxon>Colwelliaceae</taxon>
        <taxon>Colwellia</taxon>
    </lineage>
</organism>